<reference key="1">
    <citation type="submission" date="2007-09" db="EMBL/GenBank/DDBJ databases">
        <title>Complete genome sequencing of Rickettsia bellii.</title>
        <authorList>
            <person name="Madan A."/>
            <person name="Lee H."/>
            <person name="Madan A."/>
            <person name="Yoon J.-G."/>
            <person name="Ryu G.-Y."/>
            <person name="Dasch G."/>
            <person name="Ereemeva M."/>
        </authorList>
    </citation>
    <scope>NUCLEOTIDE SEQUENCE [LARGE SCALE GENOMIC DNA]</scope>
    <source>
        <strain>OSU 85-389</strain>
    </source>
</reference>
<dbReference type="EC" id="7.1.1.-" evidence="1"/>
<dbReference type="EMBL" id="CP000849">
    <property type="protein sequence ID" value="ABV79480.1"/>
    <property type="molecule type" value="Genomic_DNA"/>
</dbReference>
<dbReference type="RefSeq" id="WP_012152063.1">
    <property type="nucleotide sequence ID" value="NC_009883.1"/>
</dbReference>
<dbReference type="SMR" id="A8GX80"/>
<dbReference type="KEGG" id="rbo:A1I_05790"/>
<dbReference type="HOGENOM" id="CLU_015134_1_1_5"/>
<dbReference type="GO" id="GO:0005886">
    <property type="term" value="C:plasma membrane"/>
    <property type="evidence" value="ECO:0007669"/>
    <property type="project" value="UniProtKB-SubCell"/>
</dbReference>
<dbReference type="GO" id="GO:0051287">
    <property type="term" value="F:NAD binding"/>
    <property type="evidence" value="ECO:0007669"/>
    <property type="project" value="InterPro"/>
</dbReference>
<dbReference type="GO" id="GO:0050136">
    <property type="term" value="F:NADH:ubiquinone reductase (non-electrogenic) activity"/>
    <property type="evidence" value="ECO:0007669"/>
    <property type="project" value="UniProtKB-UniRule"/>
</dbReference>
<dbReference type="GO" id="GO:0048038">
    <property type="term" value="F:quinone binding"/>
    <property type="evidence" value="ECO:0007669"/>
    <property type="project" value="UniProtKB-KW"/>
</dbReference>
<dbReference type="FunFam" id="1.10.645.10:FF:000005">
    <property type="entry name" value="NADH-quinone oxidoreductase subunit D"/>
    <property type="match status" value="1"/>
</dbReference>
<dbReference type="Gene3D" id="1.10.645.10">
    <property type="entry name" value="Cytochrome-c3 Hydrogenase, chain B"/>
    <property type="match status" value="1"/>
</dbReference>
<dbReference type="HAMAP" id="MF_01358">
    <property type="entry name" value="NDH1_NuoD"/>
    <property type="match status" value="1"/>
</dbReference>
<dbReference type="InterPro" id="IPR001135">
    <property type="entry name" value="NADH_Q_OxRdtase_suD"/>
</dbReference>
<dbReference type="InterPro" id="IPR014029">
    <property type="entry name" value="NADH_UbQ_OxRdtase_49kDa_CS"/>
</dbReference>
<dbReference type="InterPro" id="IPR022885">
    <property type="entry name" value="NDH1_su_D/H"/>
</dbReference>
<dbReference type="InterPro" id="IPR029014">
    <property type="entry name" value="NiFe-Hase_large"/>
</dbReference>
<dbReference type="NCBIfam" id="TIGR01962">
    <property type="entry name" value="NuoD"/>
    <property type="match status" value="1"/>
</dbReference>
<dbReference type="NCBIfam" id="NF004739">
    <property type="entry name" value="PRK06075.1"/>
    <property type="match status" value="1"/>
</dbReference>
<dbReference type="PANTHER" id="PTHR11993:SF10">
    <property type="entry name" value="NADH DEHYDROGENASE [UBIQUINONE] IRON-SULFUR PROTEIN 2, MITOCHONDRIAL"/>
    <property type="match status" value="1"/>
</dbReference>
<dbReference type="PANTHER" id="PTHR11993">
    <property type="entry name" value="NADH-UBIQUINONE OXIDOREDUCTASE 49 KDA SUBUNIT"/>
    <property type="match status" value="1"/>
</dbReference>
<dbReference type="Pfam" id="PF00346">
    <property type="entry name" value="Complex1_49kDa"/>
    <property type="match status" value="1"/>
</dbReference>
<dbReference type="SUPFAM" id="SSF56762">
    <property type="entry name" value="HydB/Nqo4-like"/>
    <property type="match status" value="1"/>
</dbReference>
<dbReference type="PROSITE" id="PS00535">
    <property type="entry name" value="COMPLEX1_49K"/>
    <property type="match status" value="1"/>
</dbReference>
<gene>
    <name evidence="1" type="primary">nuoD</name>
    <name type="ordered locus">A1I_05790</name>
</gene>
<sequence length="391" mass="44571">MTNNTKSITLNLGPQHPATHGVLRLILEMDGEVVNNADPHIGLLHRGTEKLIEHKTYLQAIPYFDRLDYVSPMCQEHAFALAAESLLECEIPRRAQFIRVLFSELTRILNHTLNIGSQALDVGATTPLLWLFEEREKIMEFYERVSGSRMHSNYFRPGGVAEDLPDGLLEDIDKFIQQFPPKLQDIENLLNENRLWKQRLVDIGVVSQKEAMDWGFSGPMLRGSGIAWDLRKSNPYDVYAEMDFEVPIGKNGDCYDRYLVRMLEMYESVKIIKQCIEKMPQGPVKTDDPKLTPPTRAKMKESMEAMIHHFKLYTEGYDVPAGEIYKAVEAPKGEFGVYLYSTGGNRPYRCRIKAPGFAHLQGLDFMSKGHLMADVITIIATLDIVFGEIDR</sequence>
<protein>
    <recommendedName>
        <fullName evidence="1">NADH-quinone oxidoreductase subunit D</fullName>
        <ecNumber evidence="1">7.1.1.-</ecNumber>
    </recommendedName>
    <alternativeName>
        <fullName evidence="1">NADH dehydrogenase I subunit D</fullName>
    </alternativeName>
    <alternativeName>
        <fullName evidence="1">NDH-1 subunit D</fullName>
    </alternativeName>
</protein>
<proteinExistence type="inferred from homology"/>
<evidence type="ECO:0000255" key="1">
    <source>
        <dbReference type="HAMAP-Rule" id="MF_01358"/>
    </source>
</evidence>
<keyword id="KW-0997">Cell inner membrane</keyword>
<keyword id="KW-1003">Cell membrane</keyword>
<keyword id="KW-0472">Membrane</keyword>
<keyword id="KW-0520">NAD</keyword>
<keyword id="KW-0874">Quinone</keyword>
<keyword id="KW-1278">Translocase</keyword>
<keyword id="KW-0813">Transport</keyword>
<keyword id="KW-0830">Ubiquinone</keyword>
<feature type="chain" id="PRO_0000357911" description="NADH-quinone oxidoreductase subunit D">
    <location>
        <begin position="1"/>
        <end position="391"/>
    </location>
</feature>
<organism>
    <name type="scientific">Rickettsia bellii (strain OSU 85-389)</name>
    <dbReference type="NCBI Taxonomy" id="391896"/>
    <lineage>
        <taxon>Bacteria</taxon>
        <taxon>Pseudomonadati</taxon>
        <taxon>Pseudomonadota</taxon>
        <taxon>Alphaproteobacteria</taxon>
        <taxon>Rickettsiales</taxon>
        <taxon>Rickettsiaceae</taxon>
        <taxon>Rickettsieae</taxon>
        <taxon>Rickettsia</taxon>
        <taxon>belli group</taxon>
    </lineage>
</organism>
<name>NUOD_RICB8</name>
<accession>A8GX80</accession>
<comment type="function">
    <text evidence="1">NDH-1 shuttles electrons from NADH, via FMN and iron-sulfur (Fe-S) centers, to quinones in the respiratory chain. The immediate electron acceptor for the enzyme in this species is believed to be ubiquinone. Couples the redox reaction to proton translocation (for every two electrons transferred, four hydrogen ions are translocated across the cytoplasmic membrane), and thus conserves the redox energy in a proton gradient.</text>
</comment>
<comment type="catalytic activity">
    <reaction evidence="1">
        <text>a quinone + NADH + 5 H(+)(in) = a quinol + NAD(+) + 4 H(+)(out)</text>
        <dbReference type="Rhea" id="RHEA:57888"/>
        <dbReference type="ChEBI" id="CHEBI:15378"/>
        <dbReference type="ChEBI" id="CHEBI:24646"/>
        <dbReference type="ChEBI" id="CHEBI:57540"/>
        <dbReference type="ChEBI" id="CHEBI:57945"/>
        <dbReference type="ChEBI" id="CHEBI:132124"/>
    </reaction>
</comment>
<comment type="subunit">
    <text evidence="1">NDH-1 is composed of 14 different subunits. Subunits NuoB, C, D, E, F, and G constitute the peripheral sector of the complex.</text>
</comment>
<comment type="subcellular location">
    <subcellularLocation>
        <location evidence="1">Cell inner membrane</location>
        <topology evidence="1">Peripheral membrane protein</topology>
        <orientation evidence="1">Cytoplasmic side</orientation>
    </subcellularLocation>
</comment>
<comment type="similarity">
    <text evidence="1">Belongs to the complex I 49 kDa subunit family.</text>
</comment>